<comment type="function">
    <text>Seed storage protein.</text>
</comment>
<comment type="subcellular location">
    <subcellularLocation>
        <location>Vacuole</location>
        <location>Aleurone grain</location>
    </subcellularLocation>
    <subcellularLocation>
        <location>Vacuole</location>
    </subcellularLocation>
    <text>Cotyledonary membrane-bound vacuolar protein bodies.</text>
</comment>
<comment type="similarity">
    <text evidence="4">Belongs to the 7S seed storage protein family.</text>
</comment>
<evidence type="ECO:0000255" key="1"/>
<evidence type="ECO:0000256" key="2">
    <source>
        <dbReference type="SAM" id="MobiDB-lite"/>
    </source>
</evidence>
<evidence type="ECO:0000269" key="3">
    <source>
    </source>
</evidence>
<evidence type="ECO:0000305" key="4"/>
<sequence length="410" mass="46385">MLLAIAFLASVCVSSRSDQENPFIFKSNRFQTLYENENGHIRLLQKFDKRSKIFENLQNYRLLEYKSKPHTLFLPQYTDADFILVVLSGKATLTVLKSNDRNSFNLERGDAIKLPAGSIAYFANRDDNEEPRVLDLAIPVNKPGQLQSFLLSGTQNQKSSLSGFSKNILEAAFNTNYEEIEKVLLEQQEQEPQHRRSLKDRRQEINEENVIVKVSRDQIEELSKNAKSSSKKSVSSESGPFNLRSRNPIYSNKFGKFFEITPEKNQQLQDLDIFVNSVDIKVGSLLLPNYNSRAIVIVTVTEGKGDFELVGQRNENQGKENDKEEEQEEETSKQVQLYRAKLSPGDVFVIPAGHPVAINASSDLNLIGLGINAENNERNFLAGEEDNVISQVERPVKELAFPGSSHEVDR</sequence>
<accession>P02854</accession>
<protein>
    <recommendedName>
        <fullName>Provicilin</fullName>
    </recommendedName>
    <alternativeName>
        <fullName>Type B</fullName>
    </alternativeName>
</protein>
<dbReference type="PIR" id="A03344">
    <property type="entry name" value="FWPMVB"/>
</dbReference>
<dbReference type="SMR" id="P02854"/>
<dbReference type="Allergome" id="947">
    <property type="allergen name" value="Pis s 1"/>
</dbReference>
<dbReference type="iPTMnet" id="P02854"/>
<dbReference type="GO" id="GO:0033095">
    <property type="term" value="C:aleurone grain"/>
    <property type="evidence" value="ECO:0007669"/>
    <property type="project" value="UniProtKB-SubCell"/>
</dbReference>
<dbReference type="GO" id="GO:0005773">
    <property type="term" value="C:vacuole"/>
    <property type="evidence" value="ECO:0007669"/>
    <property type="project" value="UniProtKB-SubCell"/>
</dbReference>
<dbReference type="GO" id="GO:0045735">
    <property type="term" value="F:nutrient reservoir activity"/>
    <property type="evidence" value="ECO:0007669"/>
    <property type="project" value="UniProtKB-KW"/>
</dbReference>
<dbReference type="CDD" id="cd02245">
    <property type="entry name" value="cupin_7S_vicilin-like_C"/>
    <property type="match status" value="1"/>
</dbReference>
<dbReference type="CDD" id="cd02244">
    <property type="entry name" value="cupin_7S_vicilin-like_N"/>
    <property type="match status" value="1"/>
</dbReference>
<dbReference type="Gene3D" id="2.60.120.10">
    <property type="entry name" value="Jelly Rolls"/>
    <property type="match status" value="2"/>
</dbReference>
<dbReference type="InterPro" id="IPR006045">
    <property type="entry name" value="Cupin_1"/>
</dbReference>
<dbReference type="InterPro" id="IPR014710">
    <property type="entry name" value="RmlC-like_jellyroll"/>
</dbReference>
<dbReference type="InterPro" id="IPR011051">
    <property type="entry name" value="RmlC_Cupin_sf"/>
</dbReference>
<dbReference type="InterPro" id="IPR050253">
    <property type="entry name" value="Seed_Storage-Functional"/>
</dbReference>
<dbReference type="PANTHER" id="PTHR31189">
    <property type="entry name" value="OS03G0336100 PROTEIN-RELATED"/>
    <property type="match status" value="1"/>
</dbReference>
<dbReference type="PANTHER" id="PTHR31189:SF41">
    <property type="entry name" value="VICILIN C72"/>
    <property type="match status" value="1"/>
</dbReference>
<dbReference type="Pfam" id="PF00190">
    <property type="entry name" value="Cupin_1"/>
    <property type="match status" value="2"/>
</dbReference>
<dbReference type="SMART" id="SM00835">
    <property type="entry name" value="Cupin_1"/>
    <property type="match status" value="2"/>
</dbReference>
<dbReference type="SUPFAM" id="SSF51182">
    <property type="entry name" value="RmlC-like cupins"/>
    <property type="match status" value="2"/>
</dbReference>
<keyword id="KW-0325">Glycoprotein</keyword>
<keyword id="KW-0708">Seed storage protein</keyword>
<keyword id="KW-0732">Signal</keyword>
<keyword id="KW-0758">Storage protein</keyword>
<keyword id="KW-0926">Vacuole</keyword>
<reference key="1">
    <citation type="journal article" date="1983" name="Nucleic Acids Res.">
        <title>The vicilin gene family of pea (Pisum sativum L.): a complete cDNA coding sequence for preprovicilin.</title>
        <authorList>
            <person name="Lycett G.W."/>
            <person name="Delauney A.J."/>
            <person name="Gatehouse J.A."/>
            <person name="Gilroy J."/>
            <person name="Croy R.R.D."/>
            <person name="Boulter D."/>
        </authorList>
    </citation>
    <scope>NUCLEOTIDE SEQUENCE (CLONES PDUB7 AND PDUB4)</scope>
    <scope>GLYCOSYLATION AT ASN-359</scope>
    <source>
        <strain>cv. Feltham First</strain>
    </source>
</reference>
<feature type="signal peptide">
    <location>
        <begin position="1"/>
        <end position="15"/>
    </location>
</feature>
<feature type="chain" id="PRO_0000032182" description="Provicilin">
    <location>
        <begin position="16"/>
        <end position="410" status="greater than"/>
    </location>
</feature>
<feature type="domain" description="Cupin type-1 1" evidence="1">
    <location>
        <begin position="23"/>
        <end position="181"/>
    </location>
</feature>
<feature type="domain" description="Cupin type-1 2" evidence="1">
    <location>
        <begin position="241"/>
        <end position="409"/>
    </location>
</feature>
<feature type="region of interest" description="Disordered" evidence="2">
    <location>
        <begin position="223"/>
        <end position="242"/>
    </location>
</feature>
<feature type="region of interest" description="Disordered" evidence="2">
    <location>
        <begin position="312"/>
        <end position="331"/>
    </location>
</feature>
<feature type="compositionally biased region" description="Low complexity" evidence="2">
    <location>
        <begin position="225"/>
        <end position="238"/>
    </location>
</feature>
<feature type="site" description="Cleavage" evidence="1">
    <location>
        <begin position="221"/>
        <end position="222"/>
    </location>
</feature>
<feature type="glycosylation site" description="N-linked (GlcNAc...) asparagine" evidence="3">
    <location>
        <position position="359"/>
    </location>
</feature>
<feature type="non-terminal residue">
    <location>
        <position position="410"/>
    </location>
</feature>
<proteinExistence type="evidence at protein level"/>
<organism>
    <name type="scientific">Pisum sativum</name>
    <name type="common">Garden pea</name>
    <name type="synonym">Lathyrus oleraceus</name>
    <dbReference type="NCBI Taxonomy" id="3888"/>
    <lineage>
        <taxon>Eukaryota</taxon>
        <taxon>Viridiplantae</taxon>
        <taxon>Streptophyta</taxon>
        <taxon>Embryophyta</taxon>
        <taxon>Tracheophyta</taxon>
        <taxon>Spermatophyta</taxon>
        <taxon>Magnoliopsida</taxon>
        <taxon>eudicotyledons</taxon>
        <taxon>Gunneridae</taxon>
        <taxon>Pentapetalae</taxon>
        <taxon>rosids</taxon>
        <taxon>fabids</taxon>
        <taxon>Fabales</taxon>
        <taxon>Fabaceae</taxon>
        <taxon>Papilionoideae</taxon>
        <taxon>50 kb inversion clade</taxon>
        <taxon>NPAAA clade</taxon>
        <taxon>Hologalegina</taxon>
        <taxon>IRL clade</taxon>
        <taxon>Fabeae</taxon>
        <taxon>Pisum</taxon>
    </lineage>
</organism>
<name>VCLB_PEA</name>